<evidence type="ECO:0000255" key="1">
    <source>
        <dbReference type="HAMAP-Rule" id="MF_00046"/>
    </source>
</evidence>
<proteinExistence type="inferred from homology"/>
<sequence>MSQDQPIVLDPTYASFDAAARPADLGATHFIGIGGAGMSVLAEMLHAEGVAVDGSDRAHSAKTDRLETLGITVEFGQRAENVAQAETVVYSSAIKPDNPEIVAAHAAGKRIVHRSDILALLMNGKRAVTVAGAHGKTTTSSMLSHILVNAGADPSYAIGGFIQGPDGTTLDGGHAGKGDILVAEADESDGSFAKYHPTIAIITNCEADHLDHYGDEAHYRAAFVAHAGRATGHVIISIDDPDGLAVLEALPADVKSHTVAYGTTARESLPDLGGAAYVWIASESETAGSGVEQLTLHLPAAVTAGEPVSQSVALKVPGVHNARNAAAAISAAVLLGVSPADAAKAAGTFLGAARRFQVRGTVKQVTVVDDYAHHPTEIAALLDAARRRYPDSTIRVIFQPHLFSRTKFFAHQFAKSLAKADDVIITGIFPAREKQADFPDISPSTIVDAAAGLKDASAGTWIQPVEDMCLAAKMMAMRAHHGDVIFTVGAGDITDMDQVLLTALEAHRESCE</sequence>
<feature type="chain" id="PRO_0000182059" description="UDP-N-acetylmuramate--L-alanine ligase">
    <location>
        <begin position="1"/>
        <end position="512"/>
    </location>
</feature>
<feature type="binding site" evidence="1">
    <location>
        <begin position="132"/>
        <end position="138"/>
    </location>
    <ligand>
        <name>ATP</name>
        <dbReference type="ChEBI" id="CHEBI:30616"/>
    </ligand>
</feature>
<reference key="1">
    <citation type="journal article" date="2002" name="Proc. Natl. Acad. Sci. U.S.A.">
        <title>The genome sequence of Bifidobacterium longum reflects its adaptation to the human gastrointestinal tract.</title>
        <authorList>
            <person name="Schell M.A."/>
            <person name="Karmirantzou M."/>
            <person name="Snel B."/>
            <person name="Vilanova D."/>
            <person name="Berger B."/>
            <person name="Pessi G."/>
            <person name="Zwahlen M.-C."/>
            <person name="Desiere F."/>
            <person name="Bork P."/>
            <person name="Delley M."/>
            <person name="Pridmore R.D."/>
            <person name="Arigoni F."/>
        </authorList>
    </citation>
    <scope>NUCLEOTIDE SEQUENCE [LARGE SCALE GENOMIC DNA]</scope>
    <source>
        <strain>NCC 2705</strain>
    </source>
</reference>
<name>MURC_BIFLO</name>
<accession>Q8G4Q4</accession>
<keyword id="KW-0067">ATP-binding</keyword>
<keyword id="KW-0131">Cell cycle</keyword>
<keyword id="KW-0132">Cell division</keyword>
<keyword id="KW-0133">Cell shape</keyword>
<keyword id="KW-0961">Cell wall biogenesis/degradation</keyword>
<keyword id="KW-0963">Cytoplasm</keyword>
<keyword id="KW-0436">Ligase</keyword>
<keyword id="KW-0547">Nucleotide-binding</keyword>
<keyword id="KW-0573">Peptidoglycan synthesis</keyword>
<keyword id="KW-1185">Reference proteome</keyword>
<gene>
    <name evidence="1" type="primary">murC</name>
    <name type="ordered locus">BL1324</name>
</gene>
<dbReference type="EC" id="6.3.2.8" evidence="1"/>
<dbReference type="EMBL" id="AE014295">
    <property type="protein sequence ID" value="AAN25124.1"/>
    <property type="molecule type" value="Genomic_DNA"/>
</dbReference>
<dbReference type="RefSeq" id="NP_696488.1">
    <property type="nucleotide sequence ID" value="NC_004307.2"/>
</dbReference>
<dbReference type="RefSeq" id="WP_007054402.1">
    <property type="nucleotide sequence ID" value="NC_004307.2"/>
</dbReference>
<dbReference type="SMR" id="Q8G4Q4"/>
<dbReference type="STRING" id="206672.BL1324"/>
<dbReference type="EnsemblBacteria" id="AAN25124">
    <property type="protein sequence ID" value="AAN25124"/>
    <property type="gene ID" value="BL1324"/>
</dbReference>
<dbReference type="KEGG" id="blo:BL1324"/>
<dbReference type="PATRIC" id="fig|206672.9.peg.175"/>
<dbReference type="HOGENOM" id="CLU_028104_2_1_11"/>
<dbReference type="OrthoDB" id="9804126at2"/>
<dbReference type="PhylomeDB" id="Q8G4Q4"/>
<dbReference type="UniPathway" id="UPA00219"/>
<dbReference type="Proteomes" id="UP000000439">
    <property type="component" value="Chromosome"/>
</dbReference>
<dbReference type="GO" id="GO:0005737">
    <property type="term" value="C:cytoplasm"/>
    <property type="evidence" value="ECO:0007669"/>
    <property type="project" value="UniProtKB-SubCell"/>
</dbReference>
<dbReference type="GO" id="GO:0005524">
    <property type="term" value="F:ATP binding"/>
    <property type="evidence" value="ECO:0007669"/>
    <property type="project" value="UniProtKB-UniRule"/>
</dbReference>
<dbReference type="GO" id="GO:0008763">
    <property type="term" value="F:UDP-N-acetylmuramate-L-alanine ligase activity"/>
    <property type="evidence" value="ECO:0007669"/>
    <property type="project" value="UniProtKB-UniRule"/>
</dbReference>
<dbReference type="GO" id="GO:0051301">
    <property type="term" value="P:cell division"/>
    <property type="evidence" value="ECO:0007669"/>
    <property type="project" value="UniProtKB-KW"/>
</dbReference>
<dbReference type="GO" id="GO:0071555">
    <property type="term" value="P:cell wall organization"/>
    <property type="evidence" value="ECO:0007669"/>
    <property type="project" value="UniProtKB-KW"/>
</dbReference>
<dbReference type="GO" id="GO:0009252">
    <property type="term" value="P:peptidoglycan biosynthetic process"/>
    <property type="evidence" value="ECO:0007669"/>
    <property type="project" value="UniProtKB-UniRule"/>
</dbReference>
<dbReference type="GO" id="GO:0008360">
    <property type="term" value="P:regulation of cell shape"/>
    <property type="evidence" value="ECO:0007669"/>
    <property type="project" value="UniProtKB-KW"/>
</dbReference>
<dbReference type="Gene3D" id="3.90.190.20">
    <property type="entry name" value="Mur ligase, C-terminal domain"/>
    <property type="match status" value="1"/>
</dbReference>
<dbReference type="Gene3D" id="3.40.1190.10">
    <property type="entry name" value="Mur-like, catalytic domain"/>
    <property type="match status" value="1"/>
</dbReference>
<dbReference type="Gene3D" id="3.40.50.720">
    <property type="entry name" value="NAD(P)-binding Rossmann-like Domain"/>
    <property type="match status" value="1"/>
</dbReference>
<dbReference type="HAMAP" id="MF_00046">
    <property type="entry name" value="MurC"/>
    <property type="match status" value="1"/>
</dbReference>
<dbReference type="InterPro" id="IPR036565">
    <property type="entry name" value="Mur-like_cat_sf"/>
</dbReference>
<dbReference type="InterPro" id="IPR004101">
    <property type="entry name" value="Mur_ligase_C"/>
</dbReference>
<dbReference type="InterPro" id="IPR036615">
    <property type="entry name" value="Mur_ligase_C_dom_sf"/>
</dbReference>
<dbReference type="InterPro" id="IPR013221">
    <property type="entry name" value="Mur_ligase_cen"/>
</dbReference>
<dbReference type="InterPro" id="IPR000713">
    <property type="entry name" value="Mur_ligase_N"/>
</dbReference>
<dbReference type="InterPro" id="IPR050061">
    <property type="entry name" value="MurCDEF_pg_biosynth"/>
</dbReference>
<dbReference type="InterPro" id="IPR005758">
    <property type="entry name" value="UDP-N-AcMur_Ala_ligase_MurC"/>
</dbReference>
<dbReference type="NCBIfam" id="TIGR01082">
    <property type="entry name" value="murC"/>
    <property type="match status" value="1"/>
</dbReference>
<dbReference type="PANTHER" id="PTHR43445:SF3">
    <property type="entry name" value="UDP-N-ACETYLMURAMATE--L-ALANINE LIGASE"/>
    <property type="match status" value="1"/>
</dbReference>
<dbReference type="PANTHER" id="PTHR43445">
    <property type="entry name" value="UDP-N-ACETYLMURAMATE--L-ALANINE LIGASE-RELATED"/>
    <property type="match status" value="1"/>
</dbReference>
<dbReference type="Pfam" id="PF01225">
    <property type="entry name" value="Mur_ligase"/>
    <property type="match status" value="1"/>
</dbReference>
<dbReference type="Pfam" id="PF02875">
    <property type="entry name" value="Mur_ligase_C"/>
    <property type="match status" value="1"/>
</dbReference>
<dbReference type="Pfam" id="PF08245">
    <property type="entry name" value="Mur_ligase_M"/>
    <property type="match status" value="1"/>
</dbReference>
<dbReference type="SUPFAM" id="SSF51984">
    <property type="entry name" value="MurCD N-terminal domain"/>
    <property type="match status" value="1"/>
</dbReference>
<dbReference type="SUPFAM" id="SSF53623">
    <property type="entry name" value="MurD-like peptide ligases, catalytic domain"/>
    <property type="match status" value="1"/>
</dbReference>
<dbReference type="SUPFAM" id="SSF53244">
    <property type="entry name" value="MurD-like peptide ligases, peptide-binding domain"/>
    <property type="match status" value="1"/>
</dbReference>
<organism>
    <name type="scientific">Bifidobacterium longum (strain NCC 2705)</name>
    <dbReference type="NCBI Taxonomy" id="206672"/>
    <lineage>
        <taxon>Bacteria</taxon>
        <taxon>Bacillati</taxon>
        <taxon>Actinomycetota</taxon>
        <taxon>Actinomycetes</taxon>
        <taxon>Bifidobacteriales</taxon>
        <taxon>Bifidobacteriaceae</taxon>
        <taxon>Bifidobacterium</taxon>
    </lineage>
</organism>
<comment type="function">
    <text evidence="1">Cell wall formation.</text>
</comment>
<comment type="catalytic activity">
    <reaction evidence="1">
        <text>UDP-N-acetyl-alpha-D-muramate + L-alanine + ATP = UDP-N-acetyl-alpha-D-muramoyl-L-alanine + ADP + phosphate + H(+)</text>
        <dbReference type="Rhea" id="RHEA:23372"/>
        <dbReference type="ChEBI" id="CHEBI:15378"/>
        <dbReference type="ChEBI" id="CHEBI:30616"/>
        <dbReference type="ChEBI" id="CHEBI:43474"/>
        <dbReference type="ChEBI" id="CHEBI:57972"/>
        <dbReference type="ChEBI" id="CHEBI:70757"/>
        <dbReference type="ChEBI" id="CHEBI:83898"/>
        <dbReference type="ChEBI" id="CHEBI:456216"/>
        <dbReference type="EC" id="6.3.2.8"/>
    </reaction>
</comment>
<comment type="pathway">
    <text evidence="1">Cell wall biogenesis; peptidoglycan biosynthesis.</text>
</comment>
<comment type="subcellular location">
    <subcellularLocation>
        <location evidence="1">Cytoplasm</location>
    </subcellularLocation>
</comment>
<comment type="similarity">
    <text evidence="1">Belongs to the MurCDEF family.</text>
</comment>
<protein>
    <recommendedName>
        <fullName evidence="1">UDP-N-acetylmuramate--L-alanine ligase</fullName>
        <ecNumber evidence="1">6.3.2.8</ecNumber>
    </recommendedName>
    <alternativeName>
        <fullName evidence="1">UDP-N-acetylmuramoyl-L-alanine synthetase</fullName>
    </alternativeName>
</protein>